<feature type="signal peptide" evidence="1">
    <location>
        <begin position="1"/>
        <end position="26"/>
    </location>
</feature>
<feature type="chain" id="PRO_5000231734" description="Tol-Pal system protein TolB" evidence="1">
    <location>
        <begin position="27"/>
        <end position="431"/>
    </location>
</feature>
<feature type="region of interest" description="Disordered" evidence="2">
    <location>
        <begin position="411"/>
        <end position="431"/>
    </location>
</feature>
<name>TOLB_BURVG</name>
<sequence length="431" mass="45614">MSLMTKLGFRALVASCLIAAGGAANAQVNVLITGVGSTQFPIATANFANEAGLPQQVTSIVRADLARSGKFTNIDAGSTPVPETASVDLGAWKAKGANAFVAGSVNREANGQYKVNFILYDTVKQQSLGGLSLTANDTTLRTAGHKIADYIYQKLLGVRGVFATRLSYVIKTGNRYQLQISDSDGQNARIALSSTEPIISPAWSPSGTKVAYVSFERKKPIVYIHDLPTGRRYMVSDQKGNNSAPAWSPDGNTLAVALSLTGNTQIYTVNANGGGLRRLTQSSSIDTEPFYSPDGHWIYFTSDRGGAPQIYRMPAQGESAGAAQRVTFTGSYNTSPRVSPDGKLLAYISRTGGGFKLYVQDLQTGAANAITNTNRDESPSFAANGQYILYATQSGGRNVLAAVPTDGSAPPQILSVQGGSVREPSWGPFMQ</sequence>
<protein>
    <recommendedName>
        <fullName evidence="1">Tol-Pal system protein TolB</fullName>
    </recommendedName>
</protein>
<comment type="function">
    <text evidence="1">Part of the Tol-Pal system, which plays a role in outer membrane invagination during cell division and is important for maintaining outer membrane integrity.</text>
</comment>
<comment type="subunit">
    <text evidence="1">The Tol-Pal system is composed of five core proteins: the inner membrane proteins TolA, TolQ and TolR, the periplasmic protein TolB and the outer membrane protein Pal. They form a network linking the inner and outer membranes and the peptidoglycan layer.</text>
</comment>
<comment type="subcellular location">
    <subcellularLocation>
        <location evidence="1">Periplasm</location>
    </subcellularLocation>
</comment>
<comment type="similarity">
    <text evidence="1">Belongs to the TolB family.</text>
</comment>
<proteinExistence type="inferred from homology"/>
<accession>A4JBU1</accession>
<evidence type="ECO:0000255" key="1">
    <source>
        <dbReference type="HAMAP-Rule" id="MF_00671"/>
    </source>
</evidence>
<evidence type="ECO:0000256" key="2">
    <source>
        <dbReference type="SAM" id="MobiDB-lite"/>
    </source>
</evidence>
<reference key="1">
    <citation type="submission" date="2007-03" db="EMBL/GenBank/DDBJ databases">
        <title>Complete sequence of chromosome 1 of Burkholderia vietnamiensis G4.</title>
        <authorList>
            <consortium name="US DOE Joint Genome Institute"/>
            <person name="Copeland A."/>
            <person name="Lucas S."/>
            <person name="Lapidus A."/>
            <person name="Barry K."/>
            <person name="Detter J.C."/>
            <person name="Glavina del Rio T."/>
            <person name="Hammon N."/>
            <person name="Israni S."/>
            <person name="Dalin E."/>
            <person name="Tice H."/>
            <person name="Pitluck S."/>
            <person name="Chain P."/>
            <person name="Malfatti S."/>
            <person name="Shin M."/>
            <person name="Vergez L."/>
            <person name="Schmutz J."/>
            <person name="Larimer F."/>
            <person name="Land M."/>
            <person name="Hauser L."/>
            <person name="Kyrpides N."/>
            <person name="Tiedje J."/>
            <person name="Richardson P."/>
        </authorList>
    </citation>
    <scope>NUCLEOTIDE SEQUENCE [LARGE SCALE GENOMIC DNA]</scope>
    <source>
        <strain>G4 / LMG 22486</strain>
    </source>
</reference>
<organism>
    <name type="scientific">Burkholderia vietnamiensis (strain G4 / LMG 22486)</name>
    <name type="common">Burkholderia cepacia (strain R1808)</name>
    <dbReference type="NCBI Taxonomy" id="269482"/>
    <lineage>
        <taxon>Bacteria</taxon>
        <taxon>Pseudomonadati</taxon>
        <taxon>Pseudomonadota</taxon>
        <taxon>Betaproteobacteria</taxon>
        <taxon>Burkholderiales</taxon>
        <taxon>Burkholderiaceae</taxon>
        <taxon>Burkholderia</taxon>
        <taxon>Burkholderia cepacia complex</taxon>
    </lineage>
</organism>
<keyword id="KW-0131">Cell cycle</keyword>
<keyword id="KW-0132">Cell division</keyword>
<keyword id="KW-0574">Periplasm</keyword>
<keyword id="KW-0732">Signal</keyword>
<gene>
    <name evidence="1" type="primary">tolB</name>
    <name type="ordered locus">Bcep1808_0732</name>
</gene>
<dbReference type="EMBL" id="CP000614">
    <property type="protein sequence ID" value="ABO53744.1"/>
    <property type="molecule type" value="Genomic_DNA"/>
</dbReference>
<dbReference type="SMR" id="A4JBU1"/>
<dbReference type="KEGG" id="bvi:Bcep1808_0732"/>
<dbReference type="eggNOG" id="COG0823">
    <property type="taxonomic scope" value="Bacteria"/>
</dbReference>
<dbReference type="HOGENOM" id="CLU_047123_0_0_4"/>
<dbReference type="Proteomes" id="UP000002287">
    <property type="component" value="Chromosome 1"/>
</dbReference>
<dbReference type="GO" id="GO:0042597">
    <property type="term" value="C:periplasmic space"/>
    <property type="evidence" value="ECO:0007669"/>
    <property type="project" value="UniProtKB-SubCell"/>
</dbReference>
<dbReference type="GO" id="GO:0051301">
    <property type="term" value="P:cell division"/>
    <property type="evidence" value="ECO:0007669"/>
    <property type="project" value="UniProtKB-UniRule"/>
</dbReference>
<dbReference type="GO" id="GO:0017038">
    <property type="term" value="P:protein import"/>
    <property type="evidence" value="ECO:0007669"/>
    <property type="project" value="InterPro"/>
</dbReference>
<dbReference type="Gene3D" id="2.120.10.30">
    <property type="entry name" value="TolB, C-terminal domain"/>
    <property type="match status" value="1"/>
</dbReference>
<dbReference type="Gene3D" id="3.40.50.10070">
    <property type="entry name" value="TolB, N-terminal domain"/>
    <property type="match status" value="1"/>
</dbReference>
<dbReference type="HAMAP" id="MF_00671">
    <property type="entry name" value="TolB"/>
    <property type="match status" value="1"/>
</dbReference>
<dbReference type="InterPro" id="IPR011042">
    <property type="entry name" value="6-blade_b-propeller_TolB-like"/>
</dbReference>
<dbReference type="InterPro" id="IPR011659">
    <property type="entry name" value="PD40"/>
</dbReference>
<dbReference type="InterPro" id="IPR014167">
    <property type="entry name" value="Tol-Pal_TolB"/>
</dbReference>
<dbReference type="InterPro" id="IPR007195">
    <property type="entry name" value="TolB_N"/>
</dbReference>
<dbReference type="NCBIfam" id="TIGR02800">
    <property type="entry name" value="propeller_TolB"/>
    <property type="match status" value="1"/>
</dbReference>
<dbReference type="PANTHER" id="PTHR36842:SF1">
    <property type="entry name" value="PROTEIN TOLB"/>
    <property type="match status" value="1"/>
</dbReference>
<dbReference type="PANTHER" id="PTHR36842">
    <property type="entry name" value="PROTEIN TOLB HOMOLOG"/>
    <property type="match status" value="1"/>
</dbReference>
<dbReference type="Pfam" id="PF07676">
    <property type="entry name" value="PD40"/>
    <property type="match status" value="5"/>
</dbReference>
<dbReference type="Pfam" id="PF04052">
    <property type="entry name" value="TolB_N"/>
    <property type="match status" value="1"/>
</dbReference>
<dbReference type="SUPFAM" id="SSF52964">
    <property type="entry name" value="TolB, N-terminal domain"/>
    <property type="match status" value="1"/>
</dbReference>
<dbReference type="SUPFAM" id="SSF69304">
    <property type="entry name" value="Tricorn protease N-terminal domain"/>
    <property type="match status" value="1"/>
</dbReference>